<protein>
    <recommendedName>
        <fullName evidence="1">Arginine deiminase</fullName>
        <shortName evidence="1">ADI</shortName>
        <ecNumber evidence="1">3.5.3.6</ecNumber>
    </recommendedName>
    <alternativeName>
        <fullName evidence="1">Arginine dihydrolase</fullName>
        <shortName evidence="1">AD</shortName>
    </alternativeName>
</protein>
<proteinExistence type="inferred from homology"/>
<organism>
    <name type="scientific">Streptococcus pyogenes serotype M4 (strain MGAS10750)</name>
    <dbReference type="NCBI Taxonomy" id="370554"/>
    <lineage>
        <taxon>Bacteria</taxon>
        <taxon>Bacillati</taxon>
        <taxon>Bacillota</taxon>
        <taxon>Bacilli</taxon>
        <taxon>Lactobacillales</taxon>
        <taxon>Streptococcaceae</taxon>
        <taxon>Streptococcus</taxon>
    </lineage>
</organism>
<sequence length="411" mass="46297">MTAQTPIHVYSEIGKLKKVLLHRPGKEIENLMPDYLERLLFDDIPFLEDAQKEHDAFAQALRDEGIEVLYLETLAAESLVTPEIREAFIDEYLSEANIRGRATKKAIRELLMAIEDNQELIEKTMAGVQKSELPEIPASEKGLTDLVESNYPFAIDPMPNLYFTRDPFATIGTGVSLNHMFSETRNRETLYGKYIFTHHPIYGGGKVPMVYDRNETTRIEGGDELVLSKDVLAVGISQRTDAASIEKLLVNIFKQNLGFKKVLAFEFANNRKFMHLDTVFTMVDYDKFTIHPEIEGDLRVYSVTYDNEELHIVEEKGDLAELLAANLGVEKVDLIRCGGDNLVAAGREQWNDGSNTLTIAPGVVVVYNRNTITNAILESKGLKLIKIHGSELVRGRGGPRCMSMPFEREDI</sequence>
<comment type="catalytic activity">
    <reaction evidence="1">
        <text>L-arginine + H2O = L-citrulline + NH4(+)</text>
        <dbReference type="Rhea" id="RHEA:19597"/>
        <dbReference type="ChEBI" id="CHEBI:15377"/>
        <dbReference type="ChEBI" id="CHEBI:28938"/>
        <dbReference type="ChEBI" id="CHEBI:32682"/>
        <dbReference type="ChEBI" id="CHEBI:57743"/>
        <dbReference type="EC" id="3.5.3.6"/>
    </reaction>
</comment>
<comment type="pathway">
    <text evidence="1">Amino-acid degradation; L-arginine degradation via ADI pathway; carbamoyl phosphate from L-arginine: step 1/2.</text>
</comment>
<comment type="subcellular location">
    <subcellularLocation>
        <location evidence="1">Cytoplasm</location>
    </subcellularLocation>
</comment>
<comment type="similarity">
    <text evidence="1">Belongs to the arginine deiminase family.</text>
</comment>
<reference key="1">
    <citation type="journal article" date="2006" name="Proc. Natl. Acad. Sci. U.S.A.">
        <title>Molecular genetic anatomy of inter- and intraserotype variation in the human bacterial pathogen group A Streptococcus.</title>
        <authorList>
            <person name="Beres S.B."/>
            <person name="Richter E.W."/>
            <person name="Nagiec M.J."/>
            <person name="Sumby P."/>
            <person name="Porcella S.F."/>
            <person name="DeLeo F.R."/>
            <person name="Musser J.M."/>
        </authorList>
    </citation>
    <scope>NUCLEOTIDE SEQUENCE [LARGE SCALE GENOMIC DNA]</scope>
    <source>
        <strain>MGAS10750</strain>
    </source>
</reference>
<accession>Q1J5Q4</accession>
<evidence type="ECO:0000255" key="1">
    <source>
        <dbReference type="HAMAP-Rule" id="MF_00242"/>
    </source>
</evidence>
<keyword id="KW-0056">Arginine metabolism</keyword>
<keyword id="KW-0963">Cytoplasm</keyword>
<keyword id="KW-0378">Hydrolase</keyword>
<gene>
    <name evidence="1" type="primary">arcA</name>
    <name type="ordered locus">MGAS10750_Spy1382</name>
</gene>
<feature type="chain" id="PRO_1000005728" description="Arginine deiminase">
    <location>
        <begin position="1"/>
        <end position="411"/>
    </location>
</feature>
<feature type="active site" description="Amidino-cysteine intermediate" evidence="1">
    <location>
        <position position="401"/>
    </location>
</feature>
<dbReference type="EC" id="3.5.3.6" evidence="1"/>
<dbReference type="EMBL" id="CP000262">
    <property type="protein sequence ID" value="ABF38332.1"/>
    <property type="molecule type" value="Genomic_DNA"/>
</dbReference>
<dbReference type="SMR" id="Q1J5Q4"/>
<dbReference type="KEGG" id="spi:MGAS10750_Spy1382"/>
<dbReference type="HOGENOM" id="CLU_052662_0_1_9"/>
<dbReference type="UniPathway" id="UPA00254">
    <property type="reaction ID" value="UER00364"/>
</dbReference>
<dbReference type="Proteomes" id="UP000002434">
    <property type="component" value="Chromosome"/>
</dbReference>
<dbReference type="GO" id="GO:0005737">
    <property type="term" value="C:cytoplasm"/>
    <property type="evidence" value="ECO:0007669"/>
    <property type="project" value="UniProtKB-SubCell"/>
</dbReference>
<dbReference type="GO" id="GO:0016990">
    <property type="term" value="F:arginine deiminase activity"/>
    <property type="evidence" value="ECO:0007669"/>
    <property type="project" value="UniProtKB-UniRule"/>
</dbReference>
<dbReference type="GO" id="GO:0019547">
    <property type="term" value="P:arginine catabolic process to ornithine"/>
    <property type="evidence" value="ECO:0007669"/>
    <property type="project" value="UniProtKB-UniRule"/>
</dbReference>
<dbReference type="GO" id="GO:0019546">
    <property type="term" value="P:arginine deiminase pathway"/>
    <property type="evidence" value="ECO:0007669"/>
    <property type="project" value="TreeGrafter"/>
</dbReference>
<dbReference type="Gene3D" id="1.10.3930.10">
    <property type="entry name" value="Arginine deiminase"/>
    <property type="match status" value="1"/>
</dbReference>
<dbReference type="Gene3D" id="3.75.10.10">
    <property type="entry name" value="L-arginine/glycine Amidinotransferase, Chain A"/>
    <property type="match status" value="1"/>
</dbReference>
<dbReference type="HAMAP" id="MF_00242">
    <property type="entry name" value="Arg_deiminase"/>
    <property type="match status" value="1"/>
</dbReference>
<dbReference type="InterPro" id="IPR003876">
    <property type="entry name" value="Arg_deiminase"/>
</dbReference>
<dbReference type="NCBIfam" id="TIGR01078">
    <property type="entry name" value="arcA"/>
    <property type="match status" value="1"/>
</dbReference>
<dbReference type="NCBIfam" id="NF002381">
    <property type="entry name" value="PRK01388.1"/>
    <property type="match status" value="1"/>
</dbReference>
<dbReference type="PANTHER" id="PTHR47271">
    <property type="entry name" value="ARGININE DEIMINASE"/>
    <property type="match status" value="1"/>
</dbReference>
<dbReference type="PANTHER" id="PTHR47271:SF2">
    <property type="entry name" value="ARGININE DEIMINASE"/>
    <property type="match status" value="1"/>
</dbReference>
<dbReference type="Pfam" id="PF02274">
    <property type="entry name" value="ADI"/>
    <property type="match status" value="1"/>
</dbReference>
<dbReference type="PIRSF" id="PIRSF006356">
    <property type="entry name" value="Arg_deiminase"/>
    <property type="match status" value="1"/>
</dbReference>
<dbReference type="PRINTS" id="PR01466">
    <property type="entry name" value="ARGDEIMINASE"/>
</dbReference>
<dbReference type="SUPFAM" id="SSF55909">
    <property type="entry name" value="Pentein"/>
    <property type="match status" value="1"/>
</dbReference>
<name>ARCA_STRPF</name>